<dbReference type="EMBL" id="AAFI02000005">
    <property type="protein sequence ID" value="EAL72842.1"/>
    <property type="status" value="ALT_SEQ"/>
    <property type="molecule type" value="Genomic_DNA"/>
</dbReference>
<dbReference type="RefSeq" id="XP_646366.1">
    <property type="nucleotide sequence ID" value="XM_641274.1"/>
</dbReference>
<dbReference type="SMR" id="Q55CW5"/>
<dbReference type="FunCoup" id="Q55CW5">
    <property type="interactions" value="559"/>
</dbReference>
<dbReference type="STRING" id="44689.Q55CW5"/>
<dbReference type="PaxDb" id="44689-DDB0231154"/>
<dbReference type="EnsemblProtists" id="EAL72842">
    <property type="protein sequence ID" value="EAL72842"/>
    <property type="gene ID" value="DDB_G0270984"/>
</dbReference>
<dbReference type="GeneID" id="8617321"/>
<dbReference type="KEGG" id="ddi:DDB_G0270984"/>
<dbReference type="dictyBase" id="DDB_G0270984">
    <property type="gene designation" value="rpl36a"/>
</dbReference>
<dbReference type="VEuPathDB" id="AmoebaDB:DDB_G0270984"/>
<dbReference type="eggNOG" id="KOG3464">
    <property type="taxonomic scope" value="Eukaryota"/>
</dbReference>
<dbReference type="InParanoid" id="Q55CW5"/>
<dbReference type="Reactome" id="R-DDI-156827">
    <property type="pathway name" value="L13a-mediated translational silencing of Ceruloplasmin expression"/>
</dbReference>
<dbReference type="Reactome" id="R-DDI-1799339">
    <property type="pathway name" value="SRP-dependent cotranslational protein targeting to membrane"/>
</dbReference>
<dbReference type="Reactome" id="R-DDI-72689">
    <property type="pathway name" value="Formation of a pool of free 40S subunits"/>
</dbReference>
<dbReference type="Reactome" id="R-DDI-72706">
    <property type="pathway name" value="GTP hydrolysis and joining of the 60S ribosomal subunit"/>
</dbReference>
<dbReference type="Reactome" id="R-DDI-975956">
    <property type="pathway name" value="Nonsense Mediated Decay (NMD) independent of the Exon Junction Complex (EJC)"/>
</dbReference>
<dbReference type="Reactome" id="R-DDI-975957">
    <property type="pathway name" value="Nonsense Mediated Decay (NMD) enhanced by the Exon Junction Complex (EJC)"/>
</dbReference>
<dbReference type="PRO" id="PR:Q55CW5"/>
<dbReference type="Proteomes" id="UP000002195">
    <property type="component" value="Chromosome 1"/>
</dbReference>
<dbReference type="GO" id="GO:0022625">
    <property type="term" value="C:cytosolic large ribosomal subunit"/>
    <property type="evidence" value="ECO:0000318"/>
    <property type="project" value="GO_Central"/>
</dbReference>
<dbReference type="GO" id="GO:0003735">
    <property type="term" value="F:structural constituent of ribosome"/>
    <property type="evidence" value="ECO:0000250"/>
    <property type="project" value="dictyBase"/>
</dbReference>
<dbReference type="GO" id="GO:0006412">
    <property type="term" value="P:translation"/>
    <property type="evidence" value="ECO:0000250"/>
    <property type="project" value="dictyBase"/>
</dbReference>
<dbReference type="FunFam" id="3.10.450.80:FF:000001">
    <property type="entry name" value="60S ribosomal protein L44"/>
    <property type="match status" value="1"/>
</dbReference>
<dbReference type="Gene3D" id="3.10.450.80">
    <property type="match status" value="1"/>
</dbReference>
<dbReference type="InterPro" id="IPR000552">
    <property type="entry name" value="Ribosomal_eL44"/>
</dbReference>
<dbReference type="InterPro" id="IPR053708">
    <property type="entry name" value="Ribosomal_LSU_eL42"/>
</dbReference>
<dbReference type="InterPro" id="IPR011332">
    <property type="entry name" value="Ribosomal_zn-bd"/>
</dbReference>
<dbReference type="PANTHER" id="PTHR10369">
    <property type="entry name" value="60S RIBOSOMAL PROTEIN L36A/L44"/>
    <property type="match status" value="1"/>
</dbReference>
<dbReference type="Pfam" id="PF00935">
    <property type="entry name" value="Ribosomal_L44"/>
    <property type="match status" value="1"/>
</dbReference>
<dbReference type="SUPFAM" id="SSF57829">
    <property type="entry name" value="Zn-binding ribosomal proteins"/>
    <property type="match status" value="1"/>
</dbReference>
<dbReference type="PROSITE" id="PS01172">
    <property type="entry name" value="RIBOSOMAL_L44E"/>
    <property type="match status" value="1"/>
</dbReference>
<accession>Q55CW5</accession>
<name>RL36A_DICDI</name>
<protein>
    <recommendedName>
        <fullName evidence="2">Large ribosomal subunit protein eL42</fullName>
    </recommendedName>
    <alternativeName>
        <fullName>60S ribosomal protein L36a</fullName>
    </alternativeName>
</protein>
<evidence type="ECO:0000256" key="1">
    <source>
        <dbReference type="SAM" id="MobiDB-lite"/>
    </source>
</evidence>
<evidence type="ECO:0000305" key="2"/>
<comment type="similarity">
    <text evidence="2">Belongs to the eukaryotic ribosomal protein eL42 family.</text>
</comment>
<comment type="sequence caution" evidence="2">
    <conflict type="erroneous gene model prediction">
        <sequence resource="EMBL-CDS" id="EAL72842"/>
    </conflict>
</comment>
<keyword id="KW-1185">Reference proteome</keyword>
<keyword id="KW-0687">Ribonucleoprotein</keyword>
<keyword id="KW-0689">Ribosomal protein</keyword>
<organism>
    <name type="scientific">Dictyostelium discoideum</name>
    <name type="common">Social amoeba</name>
    <dbReference type="NCBI Taxonomy" id="44689"/>
    <lineage>
        <taxon>Eukaryota</taxon>
        <taxon>Amoebozoa</taxon>
        <taxon>Evosea</taxon>
        <taxon>Eumycetozoa</taxon>
        <taxon>Dictyostelia</taxon>
        <taxon>Dictyosteliales</taxon>
        <taxon>Dictyosteliaceae</taxon>
        <taxon>Dictyostelium</taxon>
    </lineage>
</organism>
<gene>
    <name type="primary">rpl36a</name>
    <name type="ORF">DDB_G0270984</name>
</gene>
<reference key="1">
    <citation type="journal article" date="2005" name="Nature">
        <title>The genome of the social amoeba Dictyostelium discoideum.</title>
        <authorList>
            <person name="Eichinger L."/>
            <person name="Pachebat J.A."/>
            <person name="Gloeckner G."/>
            <person name="Rajandream M.A."/>
            <person name="Sucgang R."/>
            <person name="Berriman M."/>
            <person name="Song J."/>
            <person name="Olsen R."/>
            <person name="Szafranski K."/>
            <person name="Xu Q."/>
            <person name="Tunggal B."/>
            <person name="Kummerfeld S."/>
            <person name="Madera M."/>
            <person name="Konfortov B.A."/>
            <person name="Rivero F."/>
            <person name="Bankier A.T."/>
            <person name="Lehmann R."/>
            <person name="Hamlin N."/>
            <person name="Davies R."/>
            <person name="Gaudet P."/>
            <person name="Fey P."/>
            <person name="Pilcher K."/>
            <person name="Chen G."/>
            <person name="Saunders D."/>
            <person name="Sodergren E.J."/>
            <person name="Davis P."/>
            <person name="Kerhornou A."/>
            <person name="Nie X."/>
            <person name="Hall N."/>
            <person name="Anjard C."/>
            <person name="Hemphill L."/>
            <person name="Bason N."/>
            <person name="Farbrother P."/>
            <person name="Desany B."/>
            <person name="Just E."/>
            <person name="Morio T."/>
            <person name="Rost R."/>
            <person name="Churcher C.M."/>
            <person name="Cooper J."/>
            <person name="Haydock S."/>
            <person name="van Driessche N."/>
            <person name="Cronin A."/>
            <person name="Goodhead I."/>
            <person name="Muzny D.M."/>
            <person name="Mourier T."/>
            <person name="Pain A."/>
            <person name="Lu M."/>
            <person name="Harper D."/>
            <person name="Lindsay R."/>
            <person name="Hauser H."/>
            <person name="James K.D."/>
            <person name="Quiles M."/>
            <person name="Madan Babu M."/>
            <person name="Saito T."/>
            <person name="Buchrieser C."/>
            <person name="Wardroper A."/>
            <person name="Felder M."/>
            <person name="Thangavelu M."/>
            <person name="Johnson D."/>
            <person name="Knights A."/>
            <person name="Loulseged H."/>
            <person name="Mungall K.L."/>
            <person name="Oliver K."/>
            <person name="Price C."/>
            <person name="Quail M.A."/>
            <person name="Urushihara H."/>
            <person name="Hernandez J."/>
            <person name="Rabbinowitsch E."/>
            <person name="Steffen D."/>
            <person name="Sanders M."/>
            <person name="Ma J."/>
            <person name="Kohara Y."/>
            <person name="Sharp S."/>
            <person name="Simmonds M.N."/>
            <person name="Spiegler S."/>
            <person name="Tivey A."/>
            <person name="Sugano S."/>
            <person name="White B."/>
            <person name="Walker D."/>
            <person name="Woodward J.R."/>
            <person name="Winckler T."/>
            <person name="Tanaka Y."/>
            <person name="Shaulsky G."/>
            <person name="Schleicher M."/>
            <person name="Weinstock G.M."/>
            <person name="Rosenthal A."/>
            <person name="Cox E.C."/>
            <person name="Chisholm R.L."/>
            <person name="Gibbs R.A."/>
            <person name="Loomis W.F."/>
            <person name="Platzer M."/>
            <person name="Kay R.R."/>
            <person name="Williams J.G."/>
            <person name="Dear P.H."/>
            <person name="Noegel A.A."/>
            <person name="Barrell B.G."/>
            <person name="Kuspa A."/>
        </authorList>
    </citation>
    <scope>NUCLEOTIDE SEQUENCE [LARGE SCALE GENOMIC DNA]</scope>
    <source>
        <strain>AX4</strain>
    </source>
</reference>
<sequence>MVNIPKARKTHCVKCNKHTPHKVTQYKAGKPSLFAQGKRRYDRKQSGFGGQTKPVFHKKAKTTKKIVLRMECSCGYKKQQVLKRCKRFELGGEKKSKNEAIKM</sequence>
<feature type="chain" id="PRO_0000323432" description="Large ribosomal subunit protein eL42">
    <location>
        <begin position="1"/>
        <end position="103"/>
    </location>
</feature>
<feature type="region of interest" description="Disordered" evidence="1">
    <location>
        <begin position="37"/>
        <end position="56"/>
    </location>
</feature>
<proteinExistence type="inferred from homology"/>